<reference key="1">
    <citation type="journal article" date="2002" name="Environ. Microbiol.">
        <title>Complete genome sequence and comparative analysis of the metabolically versatile Pseudomonas putida KT2440.</title>
        <authorList>
            <person name="Nelson K.E."/>
            <person name="Weinel C."/>
            <person name="Paulsen I.T."/>
            <person name="Dodson R.J."/>
            <person name="Hilbert H."/>
            <person name="Martins dos Santos V.A.P."/>
            <person name="Fouts D.E."/>
            <person name="Gill S.R."/>
            <person name="Pop M."/>
            <person name="Holmes M."/>
            <person name="Brinkac L.M."/>
            <person name="Beanan M.J."/>
            <person name="DeBoy R.T."/>
            <person name="Daugherty S.C."/>
            <person name="Kolonay J.F."/>
            <person name="Madupu R."/>
            <person name="Nelson W.C."/>
            <person name="White O."/>
            <person name="Peterson J.D."/>
            <person name="Khouri H.M."/>
            <person name="Hance I."/>
            <person name="Chris Lee P."/>
            <person name="Holtzapple E.K."/>
            <person name="Scanlan D."/>
            <person name="Tran K."/>
            <person name="Moazzez A."/>
            <person name="Utterback T.R."/>
            <person name="Rizzo M."/>
            <person name="Lee K."/>
            <person name="Kosack D."/>
            <person name="Moestl D."/>
            <person name="Wedler H."/>
            <person name="Lauber J."/>
            <person name="Stjepandic D."/>
            <person name="Hoheisel J."/>
            <person name="Straetz M."/>
            <person name="Heim S."/>
            <person name="Kiewitz C."/>
            <person name="Eisen J.A."/>
            <person name="Timmis K.N."/>
            <person name="Duesterhoeft A."/>
            <person name="Tuemmler B."/>
            <person name="Fraser C.M."/>
        </authorList>
    </citation>
    <scope>NUCLEOTIDE SEQUENCE [LARGE SCALE GENOMIC DNA]</scope>
    <source>
        <strain>ATCC 47054 / DSM 6125 / CFBP 8728 / NCIMB 11950 / KT2440</strain>
    </source>
</reference>
<sequence length="351" mass="36067">MTQAWWRDACQPLDNAAMDQARARQQQLTKPAGSLGQLEALAIQLAGLQGLERPTLDQVAITIFAGDHGVVEEGISAYPQAVTGQMLRNFVGGGAAISVLARQLQASLDVVDLGTIDAQLELPGVRHLRLGTGTANFARQPAMTENQLQAALQAGRDSAQRAAEQGAQLFIGGEMGIGNTTAAAALASVLLGCPASELSGPGTGLDNAGVQHKAEVIERALRLHGLRAEDPLQALACVGGFEIAALAGAYLGCAQAGVTVLVDGFICSVAALVAVRLNPQCRAWLLFAHQGAEPGHKTLLAALQAEPLLALGLRLGEGSGAALAVPLLRLACALHGQMATFAEAAVADRPA</sequence>
<organism>
    <name type="scientific">Pseudomonas putida (strain ATCC 47054 / DSM 6125 / CFBP 8728 / NCIMB 11950 / KT2440)</name>
    <dbReference type="NCBI Taxonomy" id="160488"/>
    <lineage>
        <taxon>Bacteria</taxon>
        <taxon>Pseudomonadati</taxon>
        <taxon>Pseudomonadota</taxon>
        <taxon>Gammaproteobacteria</taxon>
        <taxon>Pseudomonadales</taxon>
        <taxon>Pseudomonadaceae</taxon>
        <taxon>Pseudomonas</taxon>
    </lineage>
</organism>
<feature type="chain" id="PRO_0000167062" description="Nicotinate-nucleotide--dimethylbenzimidazole phosphoribosyltransferase">
    <location>
        <begin position="1"/>
        <end position="351"/>
    </location>
</feature>
<feature type="active site" description="Proton acceptor" evidence="1">
    <location>
        <position position="317"/>
    </location>
</feature>
<comment type="function">
    <text evidence="1">Catalyzes the synthesis of alpha-ribazole-5'-phosphate from nicotinate mononucleotide (NAMN) and 5,6-dimethylbenzimidazole (DMB).</text>
</comment>
<comment type="catalytic activity">
    <reaction evidence="1">
        <text>5,6-dimethylbenzimidazole + nicotinate beta-D-ribonucleotide = alpha-ribazole 5'-phosphate + nicotinate + H(+)</text>
        <dbReference type="Rhea" id="RHEA:11196"/>
        <dbReference type="ChEBI" id="CHEBI:15378"/>
        <dbReference type="ChEBI" id="CHEBI:15890"/>
        <dbReference type="ChEBI" id="CHEBI:32544"/>
        <dbReference type="ChEBI" id="CHEBI:57502"/>
        <dbReference type="ChEBI" id="CHEBI:57918"/>
        <dbReference type="EC" id="2.4.2.21"/>
    </reaction>
</comment>
<comment type="pathway">
    <text evidence="1">Nucleoside biosynthesis; alpha-ribazole biosynthesis; alpha-ribazole from 5,6-dimethylbenzimidazole: step 1/2.</text>
</comment>
<comment type="similarity">
    <text evidence="1">Belongs to the CobT family.</text>
</comment>
<keyword id="KW-0169">Cobalamin biosynthesis</keyword>
<keyword id="KW-0328">Glycosyltransferase</keyword>
<keyword id="KW-1185">Reference proteome</keyword>
<keyword id="KW-0808">Transferase</keyword>
<dbReference type="EC" id="2.4.2.21" evidence="1"/>
<dbReference type="EMBL" id="AE015451">
    <property type="protein sequence ID" value="AAN67300.1"/>
    <property type="molecule type" value="Genomic_DNA"/>
</dbReference>
<dbReference type="RefSeq" id="NP_743836.1">
    <property type="nucleotide sequence ID" value="NC_002947.4"/>
</dbReference>
<dbReference type="RefSeq" id="WP_010952732.1">
    <property type="nucleotide sequence ID" value="NZ_CP169744.1"/>
</dbReference>
<dbReference type="SMR" id="Q88M95"/>
<dbReference type="STRING" id="160488.PP_1679"/>
<dbReference type="PaxDb" id="160488-PP_1679"/>
<dbReference type="KEGG" id="ppu:PP_1679"/>
<dbReference type="PATRIC" id="fig|160488.4.peg.1772"/>
<dbReference type="eggNOG" id="COG2038">
    <property type="taxonomic scope" value="Bacteria"/>
</dbReference>
<dbReference type="HOGENOM" id="CLU_002982_0_1_6"/>
<dbReference type="OrthoDB" id="9781491at2"/>
<dbReference type="PhylomeDB" id="Q88M95"/>
<dbReference type="BioCyc" id="PPUT160488:G1G01-1777-MONOMER"/>
<dbReference type="UniPathway" id="UPA00061">
    <property type="reaction ID" value="UER00516"/>
</dbReference>
<dbReference type="Proteomes" id="UP000000556">
    <property type="component" value="Chromosome"/>
</dbReference>
<dbReference type="GO" id="GO:0008939">
    <property type="term" value="F:nicotinate-nucleotide-dimethylbenzimidazole phosphoribosyltransferase activity"/>
    <property type="evidence" value="ECO:0007669"/>
    <property type="project" value="UniProtKB-UniRule"/>
</dbReference>
<dbReference type="GO" id="GO:0009236">
    <property type="term" value="P:cobalamin biosynthetic process"/>
    <property type="evidence" value="ECO:0007669"/>
    <property type="project" value="UniProtKB-KW"/>
</dbReference>
<dbReference type="CDD" id="cd02439">
    <property type="entry name" value="DMB-PRT_CobT"/>
    <property type="match status" value="1"/>
</dbReference>
<dbReference type="FunFam" id="3.40.50.10210:FF:000001">
    <property type="entry name" value="Nicotinate-nucleotide--dimethylbenzimidazole phosphoribosyltransferase"/>
    <property type="match status" value="1"/>
</dbReference>
<dbReference type="Gene3D" id="1.10.1610.10">
    <property type="match status" value="1"/>
</dbReference>
<dbReference type="Gene3D" id="3.40.50.10210">
    <property type="match status" value="1"/>
</dbReference>
<dbReference type="HAMAP" id="MF_00230">
    <property type="entry name" value="CobT"/>
    <property type="match status" value="1"/>
</dbReference>
<dbReference type="InterPro" id="IPR003200">
    <property type="entry name" value="Nict_dMeBzImd_PRibTrfase"/>
</dbReference>
<dbReference type="InterPro" id="IPR017846">
    <property type="entry name" value="Nict_dMeBzImd_PRibTrfase_bact"/>
</dbReference>
<dbReference type="InterPro" id="IPR023195">
    <property type="entry name" value="Nict_dMeBzImd_PRibTrfase_N"/>
</dbReference>
<dbReference type="InterPro" id="IPR036087">
    <property type="entry name" value="Nict_dMeBzImd_PRibTrfase_sf"/>
</dbReference>
<dbReference type="NCBIfam" id="TIGR03160">
    <property type="entry name" value="cobT_DBIPRT"/>
    <property type="match status" value="1"/>
</dbReference>
<dbReference type="NCBIfam" id="NF000996">
    <property type="entry name" value="PRK00105.1"/>
    <property type="match status" value="1"/>
</dbReference>
<dbReference type="PANTHER" id="PTHR43463">
    <property type="entry name" value="NICOTINATE-NUCLEOTIDE--DIMETHYLBENZIMIDAZOLE PHOSPHORIBOSYLTRANSFERASE"/>
    <property type="match status" value="1"/>
</dbReference>
<dbReference type="PANTHER" id="PTHR43463:SF1">
    <property type="entry name" value="NICOTINATE-NUCLEOTIDE--DIMETHYLBENZIMIDAZOLE PHOSPHORIBOSYLTRANSFERASE"/>
    <property type="match status" value="1"/>
</dbReference>
<dbReference type="Pfam" id="PF02277">
    <property type="entry name" value="DBI_PRT"/>
    <property type="match status" value="1"/>
</dbReference>
<dbReference type="SUPFAM" id="SSF52733">
    <property type="entry name" value="Nicotinate mononucleotide:5,6-dimethylbenzimidazole phosphoribosyltransferase (CobT)"/>
    <property type="match status" value="1"/>
</dbReference>
<accession>Q88M95</accession>
<proteinExistence type="inferred from homology"/>
<name>COBT_PSEPK</name>
<evidence type="ECO:0000255" key="1">
    <source>
        <dbReference type="HAMAP-Rule" id="MF_00230"/>
    </source>
</evidence>
<gene>
    <name evidence="1" type="primary">cobT</name>
    <name type="ordered locus">PP_1679</name>
</gene>
<protein>
    <recommendedName>
        <fullName evidence="1">Nicotinate-nucleotide--dimethylbenzimidazole phosphoribosyltransferase</fullName>
        <shortName evidence="1">NN:DBI PRT</shortName>
        <ecNumber evidence="1">2.4.2.21</ecNumber>
    </recommendedName>
    <alternativeName>
        <fullName evidence="1">N(1)-alpha-phosphoribosyltransferase</fullName>
    </alternativeName>
</protein>